<feature type="chain" id="PRO_1000071779" description="Ribonuclease P protein component">
    <location>
        <begin position="1"/>
        <end position="113"/>
    </location>
</feature>
<evidence type="ECO:0000255" key="1">
    <source>
        <dbReference type="HAMAP-Rule" id="MF_00227"/>
    </source>
</evidence>
<gene>
    <name evidence="1" type="primary">rnpA</name>
    <name type="ordered locus">Dred_3328</name>
</gene>
<proteinExistence type="inferred from homology"/>
<reference key="1">
    <citation type="submission" date="2007-03" db="EMBL/GenBank/DDBJ databases">
        <title>Complete sequence of Desulfotomaculum reducens MI-1.</title>
        <authorList>
            <consortium name="US DOE Joint Genome Institute"/>
            <person name="Copeland A."/>
            <person name="Lucas S."/>
            <person name="Lapidus A."/>
            <person name="Barry K."/>
            <person name="Detter J.C."/>
            <person name="Glavina del Rio T."/>
            <person name="Hammon N."/>
            <person name="Israni S."/>
            <person name="Dalin E."/>
            <person name="Tice H."/>
            <person name="Pitluck S."/>
            <person name="Sims D."/>
            <person name="Brettin T."/>
            <person name="Bruce D."/>
            <person name="Han C."/>
            <person name="Tapia R."/>
            <person name="Schmutz J."/>
            <person name="Larimer F."/>
            <person name="Land M."/>
            <person name="Hauser L."/>
            <person name="Kyrpides N."/>
            <person name="Kim E."/>
            <person name="Tebo B.M."/>
            <person name="Richardson P."/>
        </authorList>
    </citation>
    <scope>NUCLEOTIDE SEQUENCE [LARGE SCALE GENOMIC DNA]</scope>
    <source>
        <strain>ATCC BAA-1160 / DSM 100696 / MI-1</strain>
    </source>
</reference>
<accession>A4J9S4</accession>
<dbReference type="EC" id="3.1.26.5" evidence="1"/>
<dbReference type="EMBL" id="CP000612">
    <property type="protein sequence ID" value="ABO51827.1"/>
    <property type="molecule type" value="Genomic_DNA"/>
</dbReference>
<dbReference type="RefSeq" id="WP_011879612.1">
    <property type="nucleotide sequence ID" value="NC_009253.1"/>
</dbReference>
<dbReference type="SMR" id="A4J9S4"/>
<dbReference type="STRING" id="349161.Dred_3328"/>
<dbReference type="KEGG" id="drm:Dred_3328"/>
<dbReference type="eggNOG" id="COG0594">
    <property type="taxonomic scope" value="Bacteria"/>
</dbReference>
<dbReference type="HOGENOM" id="CLU_117179_9_3_9"/>
<dbReference type="OrthoDB" id="9810867at2"/>
<dbReference type="Proteomes" id="UP000001556">
    <property type="component" value="Chromosome"/>
</dbReference>
<dbReference type="GO" id="GO:0030677">
    <property type="term" value="C:ribonuclease P complex"/>
    <property type="evidence" value="ECO:0007669"/>
    <property type="project" value="TreeGrafter"/>
</dbReference>
<dbReference type="GO" id="GO:0042781">
    <property type="term" value="F:3'-tRNA processing endoribonuclease activity"/>
    <property type="evidence" value="ECO:0007669"/>
    <property type="project" value="TreeGrafter"/>
</dbReference>
<dbReference type="GO" id="GO:0004526">
    <property type="term" value="F:ribonuclease P activity"/>
    <property type="evidence" value="ECO:0007669"/>
    <property type="project" value="UniProtKB-UniRule"/>
</dbReference>
<dbReference type="GO" id="GO:0000049">
    <property type="term" value="F:tRNA binding"/>
    <property type="evidence" value="ECO:0007669"/>
    <property type="project" value="UniProtKB-UniRule"/>
</dbReference>
<dbReference type="GO" id="GO:0001682">
    <property type="term" value="P:tRNA 5'-leader removal"/>
    <property type="evidence" value="ECO:0007669"/>
    <property type="project" value="UniProtKB-UniRule"/>
</dbReference>
<dbReference type="Gene3D" id="3.30.230.10">
    <property type="match status" value="1"/>
</dbReference>
<dbReference type="HAMAP" id="MF_00227">
    <property type="entry name" value="RNase_P"/>
    <property type="match status" value="1"/>
</dbReference>
<dbReference type="InterPro" id="IPR020568">
    <property type="entry name" value="Ribosomal_Su5_D2-typ_SF"/>
</dbReference>
<dbReference type="InterPro" id="IPR014721">
    <property type="entry name" value="Ribsml_uS5_D2-typ_fold_subgr"/>
</dbReference>
<dbReference type="InterPro" id="IPR000100">
    <property type="entry name" value="RNase_P"/>
</dbReference>
<dbReference type="InterPro" id="IPR020539">
    <property type="entry name" value="RNase_P_CS"/>
</dbReference>
<dbReference type="NCBIfam" id="TIGR00188">
    <property type="entry name" value="rnpA"/>
    <property type="match status" value="1"/>
</dbReference>
<dbReference type="PANTHER" id="PTHR33992">
    <property type="entry name" value="RIBONUCLEASE P PROTEIN COMPONENT"/>
    <property type="match status" value="1"/>
</dbReference>
<dbReference type="PANTHER" id="PTHR33992:SF1">
    <property type="entry name" value="RIBONUCLEASE P PROTEIN COMPONENT"/>
    <property type="match status" value="1"/>
</dbReference>
<dbReference type="Pfam" id="PF00825">
    <property type="entry name" value="Ribonuclease_P"/>
    <property type="match status" value="1"/>
</dbReference>
<dbReference type="SUPFAM" id="SSF54211">
    <property type="entry name" value="Ribosomal protein S5 domain 2-like"/>
    <property type="match status" value="1"/>
</dbReference>
<dbReference type="PROSITE" id="PS00648">
    <property type="entry name" value="RIBONUCLEASE_P"/>
    <property type="match status" value="1"/>
</dbReference>
<organism>
    <name type="scientific">Desulforamulus reducens (strain ATCC BAA-1160 / DSM 100696 / MI-1)</name>
    <name type="common">Desulfotomaculum reducens</name>
    <dbReference type="NCBI Taxonomy" id="349161"/>
    <lineage>
        <taxon>Bacteria</taxon>
        <taxon>Bacillati</taxon>
        <taxon>Bacillota</taxon>
        <taxon>Clostridia</taxon>
        <taxon>Eubacteriales</taxon>
        <taxon>Peptococcaceae</taxon>
        <taxon>Desulforamulus</taxon>
    </lineage>
</organism>
<protein>
    <recommendedName>
        <fullName evidence="1">Ribonuclease P protein component</fullName>
        <shortName evidence="1">RNase P protein</shortName>
        <shortName evidence="1">RNaseP protein</shortName>
        <ecNumber evidence="1">3.1.26.5</ecNumber>
    </recommendedName>
    <alternativeName>
        <fullName evidence="1">Protein C5</fullName>
    </alternativeName>
</protein>
<keyword id="KW-0255">Endonuclease</keyword>
<keyword id="KW-0378">Hydrolase</keyword>
<keyword id="KW-0540">Nuclease</keyword>
<keyword id="KW-1185">Reference proteome</keyword>
<keyword id="KW-0694">RNA-binding</keyword>
<keyword id="KW-0819">tRNA processing</keyword>
<name>RNPA_DESRM</name>
<comment type="function">
    <text evidence="1">RNaseP catalyzes the removal of the 5'-leader sequence from pre-tRNA to produce the mature 5'-terminus. It can also cleave other RNA substrates such as 4.5S RNA. The protein component plays an auxiliary but essential role in vivo by binding to the 5'-leader sequence and broadening the substrate specificity of the ribozyme.</text>
</comment>
<comment type="catalytic activity">
    <reaction evidence="1">
        <text>Endonucleolytic cleavage of RNA, removing 5'-extranucleotides from tRNA precursor.</text>
        <dbReference type="EC" id="3.1.26.5"/>
    </reaction>
</comment>
<comment type="subunit">
    <text evidence="1">Consists of a catalytic RNA component (M1 or rnpB) and a protein subunit.</text>
</comment>
<comment type="similarity">
    <text evidence="1">Belongs to the RnpA family.</text>
</comment>
<sequence length="113" mass="13624">MKKFVSLKKNSDFRNVYRFGVSAANRYLVLYKFPNKGLGRRFGFSISKKVGKAVCRNRLRRILKELCRFHLDRFSDDCDFVFIVRQTSSDQDFHQMEKHMWHVWGKLNKQEKN</sequence>